<evidence type="ECO:0000269" key="1">
    <source>
    </source>
</evidence>
<evidence type="ECO:0000269" key="2">
    <source>
    </source>
</evidence>
<evidence type="ECO:0000269" key="3">
    <source>
    </source>
</evidence>
<evidence type="ECO:0000269" key="4">
    <source>
    </source>
</evidence>
<evidence type="ECO:0000305" key="5">
    <source>
    </source>
</evidence>
<evidence type="ECO:0007829" key="6">
    <source>
        <dbReference type="PDB" id="2QCP"/>
    </source>
</evidence>
<evidence type="ECO:0007829" key="7">
    <source>
        <dbReference type="PDB" id="2VB3"/>
    </source>
</evidence>
<name>CUSF_ECOLI</name>
<feature type="signal peptide" evidence="3">
    <location>
        <begin position="1"/>
        <end position="21"/>
    </location>
</feature>
<feature type="chain" id="PRO_0000021046" description="Cation efflux system protein CusF">
    <location>
        <begin position="22"/>
        <end position="110"/>
    </location>
</feature>
<feature type="mutagenesis site" description="No change in copper resistance." evidence="3">
    <original>HHH</original>
    <variation>QQQ</variation>
    <location>
        <begin position="25"/>
        <end position="27"/>
    </location>
</feature>
<feature type="mutagenesis site" description="Wild-type Cu(+) binding, 50% decrease in Cu transfer from CopA; when associated with A-72." evidence="4">
    <original>KGIDLESKKITIH</original>
    <variation>AGIDLESAAITIA</variation>
    <location>
        <begin position="45"/>
        <end position="57"/>
    </location>
</feature>
<feature type="mutagenesis site" description="No change in copper resistance." evidence="3">
    <original>D</original>
    <variation>N</variation>
    <location>
        <position position="48"/>
    </location>
</feature>
<feature type="mutagenesis site" description="Slight decrease in copper resistance." evidence="3">
    <original>HH</original>
    <variation>QQ</variation>
    <location>
        <begin position="57"/>
        <end position="58"/>
    </location>
</feature>
<feature type="mutagenesis site" description="Binds Cu(+) very poorly, does not receive Cu(+) from CopA." evidence="4">
    <original>MTM</original>
    <variation>ITI</variation>
    <location>
        <begin position="69"/>
        <end position="71"/>
    </location>
</feature>
<feature type="mutagenesis site" description="Loss of copper resistance and strong decrease in copper binding; when associated with I-71." evidence="3">
    <original>M</original>
    <variation>I</variation>
    <location>
        <position position="69"/>
    </location>
</feature>
<feature type="mutagenesis site" description="Loss of copper resistance and strong decrease in copper binding; when associated with I-69." evidence="3">
    <original>M</original>
    <variation>I</variation>
    <location>
        <position position="71"/>
    </location>
</feature>
<feature type="mutagenesis site" description="Wild-type Cu(+) binding, 50% decrease in Cu transfer from CopA; when associated with 45-A--A-57." evidence="4">
    <original>R</original>
    <variation>A</variation>
    <location>
        <position position="72"/>
    </location>
</feature>
<feature type="mutagenesis site" description="No change in copper resistance." evidence="3">
    <original>F</original>
    <variation>Y</variation>
    <location>
        <position position="73"/>
    </location>
</feature>
<feature type="strand" evidence="6">
    <location>
        <begin position="38"/>
        <end position="48"/>
    </location>
</feature>
<feature type="turn" evidence="6">
    <location>
        <begin position="49"/>
        <end position="52"/>
    </location>
</feature>
<feature type="strand" evidence="6">
    <location>
        <begin position="53"/>
        <end position="58"/>
    </location>
</feature>
<feature type="helix" evidence="6">
    <location>
        <begin position="62"/>
        <end position="64"/>
    </location>
</feature>
<feature type="strand" evidence="6">
    <location>
        <begin position="68"/>
        <end position="74"/>
    </location>
</feature>
<feature type="strand" evidence="7">
    <location>
        <begin position="79"/>
        <end position="81"/>
    </location>
</feature>
<feature type="strand" evidence="6">
    <location>
        <begin position="89"/>
        <end position="97"/>
    </location>
</feature>
<feature type="strand" evidence="6">
    <location>
        <begin position="100"/>
        <end position="108"/>
    </location>
</feature>
<sequence>MKKALQVAMFSLFTVIGFNAQANEHHHETMSEAQPQVISATGVVKGIDLESKKITIHHDPIAAVNWPEMTMRFTITPQTKMSEIKTGDKVAFNFVQQGNLSLLQDIKVSQ</sequence>
<keyword id="KW-0002">3D-structure</keyword>
<keyword id="KW-0186">Copper</keyword>
<keyword id="KW-0903">Direct protein sequencing</keyword>
<keyword id="KW-0479">Metal-binding</keyword>
<keyword id="KW-0574">Periplasm</keyword>
<keyword id="KW-1185">Reference proteome</keyword>
<keyword id="KW-0732">Signal</keyword>
<gene>
    <name type="primary">cusF</name>
    <name type="synonym">cusX</name>
    <name type="synonym">ylcC</name>
    <name type="ordered locus">b0573</name>
    <name type="ordered locus">JW0562</name>
</gene>
<protein>
    <recommendedName>
        <fullName>Cation efflux system protein CusF</fullName>
    </recommendedName>
</protein>
<dbReference type="EMBL" id="U82598">
    <property type="protein sequence ID" value="AAB40771.1"/>
    <property type="molecule type" value="Genomic_DNA"/>
</dbReference>
<dbReference type="EMBL" id="U00096">
    <property type="protein sequence ID" value="AAC73674.1"/>
    <property type="molecule type" value="Genomic_DNA"/>
</dbReference>
<dbReference type="EMBL" id="AP009048">
    <property type="protein sequence ID" value="BAA35207.1"/>
    <property type="molecule type" value="Genomic_DNA"/>
</dbReference>
<dbReference type="PIR" id="C64790">
    <property type="entry name" value="C64790"/>
</dbReference>
<dbReference type="RefSeq" id="NP_415105.1">
    <property type="nucleotide sequence ID" value="NC_000913.3"/>
</dbReference>
<dbReference type="RefSeq" id="WP_000709870.1">
    <property type="nucleotide sequence ID" value="NZ_SSZK01000024.1"/>
</dbReference>
<dbReference type="PDB" id="1ZEQ">
    <property type="method" value="X-ray"/>
    <property type="resolution" value="1.50 A"/>
    <property type="chains" value="X=28-110"/>
</dbReference>
<dbReference type="PDB" id="2QCP">
    <property type="method" value="X-ray"/>
    <property type="resolution" value="1.00 A"/>
    <property type="chains" value="X=32-110"/>
</dbReference>
<dbReference type="PDB" id="2VB2">
    <property type="method" value="X-ray"/>
    <property type="resolution" value="1.70 A"/>
    <property type="chains" value="X=23-110"/>
</dbReference>
<dbReference type="PDB" id="2VB3">
    <property type="method" value="X-ray"/>
    <property type="resolution" value="2.33 A"/>
    <property type="chains" value="X=23-110"/>
</dbReference>
<dbReference type="PDB" id="3E6Z">
    <property type="method" value="X-ray"/>
    <property type="resolution" value="1.00 A"/>
    <property type="chains" value="X=32-110"/>
</dbReference>
<dbReference type="PDBsum" id="1ZEQ"/>
<dbReference type="PDBsum" id="2QCP"/>
<dbReference type="PDBsum" id="2VB2"/>
<dbReference type="PDBsum" id="2VB3"/>
<dbReference type="PDBsum" id="3E6Z"/>
<dbReference type="SMR" id="P77214"/>
<dbReference type="BioGRID" id="4262045">
    <property type="interactions" value="220"/>
</dbReference>
<dbReference type="ComplexPortal" id="CPX-2254">
    <property type="entry name" value="Cus cation efflux complex"/>
</dbReference>
<dbReference type="DIP" id="DIP-9350N"/>
<dbReference type="FunCoup" id="P77214">
    <property type="interactions" value="175"/>
</dbReference>
<dbReference type="IntAct" id="P77214">
    <property type="interactions" value="2"/>
</dbReference>
<dbReference type="STRING" id="511145.b0573"/>
<dbReference type="TCDB" id="2.A.6.1.4">
    <property type="family name" value="the resistance-nodulation-cell division (rnd) superfamily"/>
</dbReference>
<dbReference type="PaxDb" id="511145-b0573"/>
<dbReference type="EnsemblBacteria" id="AAC73674">
    <property type="protein sequence ID" value="AAC73674"/>
    <property type="gene ID" value="b0573"/>
</dbReference>
<dbReference type="GeneID" id="945188"/>
<dbReference type="KEGG" id="ecj:JW0562"/>
<dbReference type="KEGG" id="eco:b0573"/>
<dbReference type="KEGG" id="ecoc:C3026_02845"/>
<dbReference type="PATRIC" id="fig|1411691.4.peg.1701"/>
<dbReference type="EchoBASE" id="EB3985"/>
<dbReference type="eggNOG" id="COG5569">
    <property type="taxonomic scope" value="Bacteria"/>
</dbReference>
<dbReference type="HOGENOM" id="CLU_140852_2_1_6"/>
<dbReference type="InParanoid" id="P77214"/>
<dbReference type="OMA" id="MHEQPAA"/>
<dbReference type="OrthoDB" id="5771277at2"/>
<dbReference type="BioCyc" id="EcoCyc:G6321-MONOMER"/>
<dbReference type="BioCyc" id="MetaCyc:G6321-MONOMER"/>
<dbReference type="EvolutionaryTrace" id="P77214"/>
<dbReference type="PRO" id="PR:P77214"/>
<dbReference type="Proteomes" id="UP000000625">
    <property type="component" value="Chromosome"/>
</dbReference>
<dbReference type="GO" id="GO:0030288">
    <property type="term" value="C:outer membrane-bounded periplasmic space"/>
    <property type="evidence" value="ECO:0000315"/>
    <property type="project" value="EcoCyc"/>
</dbReference>
<dbReference type="GO" id="GO:0042597">
    <property type="term" value="C:periplasmic space"/>
    <property type="evidence" value="ECO:0000315"/>
    <property type="project" value="EcoliWiki"/>
</dbReference>
<dbReference type="GO" id="GO:0016531">
    <property type="term" value="F:copper chaperone activity"/>
    <property type="evidence" value="ECO:0000314"/>
    <property type="project" value="EcoCyc"/>
</dbReference>
<dbReference type="GO" id="GO:0005507">
    <property type="term" value="F:copper ion binding"/>
    <property type="evidence" value="ECO:0000314"/>
    <property type="project" value="EcoCyc"/>
</dbReference>
<dbReference type="GO" id="GO:0016530">
    <property type="term" value="F:metallochaperone activity"/>
    <property type="evidence" value="ECO:0000314"/>
    <property type="project" value="EcoliWiki"/>
</dbReference>
<dbReference type="GO" id="GO:0046914">
    <property type="term" value="F:transition metal ion binding"/>
    <property type="evidence" value="ECO:0000314"/>
    <property type="project" value="EcoCyc"/>
</dbReference>
<dbReference type="GO" id="GO:0060003">
    <property type="term" value="P:copper ion export"/>
    <property type="evidence" value="ECO:0000303"/>
    <property type="project" value="ComplexPortal"/>
</dbReference>
<dbReference type="GO" id="GO:0035434">
    <property type="term" value="P:copper ion transmembrane transport"/>
    <property type="evidence" value="ECO:0000303"/>
    <property type="project" value="ComplexPortal"/>
</dbReference>
<dbReference type="GO" id="GO:0010273">
    <property type="term" value="P:detoxification of copper ion"/>
    <property type="evidence" value="ECO:0000316"/>
    <property type="project" value="EcoCyc"/>
</dbReference>
<dbReference type="GO" id="GO:0006878">
    <property type="term" value="P:intracellular copper ion homeostasis"/>
    <property type="evidence" value="ECO:0000316"/>
    <property type="project" value="EcoCyc"/>
</dbReference>
<dbReference type="GO" id="GO:0046688">
    <property type="term" value="P:response to copper ion"/>
    <property type="evidence" value="ECO:0000270"/>
    <property type="project" value="EcoCyc"/>
</dbReference>
<dbReference type="GO" id="GO:0010272">
    <property type="term" value="P:response to silver ion"/>
    <property type="evidence" value="ECO:0000315"/>
    <property type="project" value="EcoCyc"/>
</dbReference>
<dbReference type="GO" id="GO:0009636">
    <property type="term" value="P:response to toxic substance"/>
    <property type="evidence" value="ECO:0000303"/>
    <property type="project" value="ComplexPortal"/>
</dbReference>
<dbReference type="GO" id="GO:0010043">
    <property type="term" value="P:response to zinc ion"/>
    <property type="evidence" value="ECO:0000270"/>
    <property type="project" value="EcoCyc"/>
</dbReference>
<dbReference type="GO" id="GO:1902601">
    <property type="term" value="P:silver ion transmembrane transport"/>
    <property type="evidence" value="ECO:0000303"/>
    <property type="project" value="ComplexPortal"/>
</dbReference>
<dbReference type="FunFam" id="2.40.50.320:FF:000001">
    <property type="entry name" value="Cation efflux system protein CusF"/>
    <property type="match status" value="1"/>
</dbReference>
<dbReference type="Gene3D" id="2.40.50.320">
    <property type="entry name" value="Copper binding periplasmic protein CusF"/>
    <property type="match status" value="1"/>
</dbReference>
<dbReference type="InterPro" id="IPR021647">
    <property type="entry name" value="CusF_Ec"/>
</dbReference>
<dbReference type="InterPro" id="IPR042230">
    <property type="entry name" value="CusF_sf"/>
</dbReference>
<dbReference type="NCBIfam" id="NF007348">
    <property type="entry name" value="PRK09838.1"/>
    <property type="match status" value="1"/>
</dbReference>
<dbReference type="Pfam" id="PF11604">
    <property type="entry name" value="CusF_Ec"/>
    <property type="match status" value="1"/>
</dbReference>
<proteinExistence type="evidence at protein level"/>
<reference key="1">
    <citation type="journal article" date="1996" name="DNA Res.">
        <title>A 718-kb DNA sequence of the Escherichia coli K-12 genome corresponding to the 12.7-28.0 min region on the linkage map.</title>
        <authorList>
            <person name="Oshima T."/>
            <person name="Aiba H."/>
            <person name="Baba T."/>
            <person name="Fujita K."/>
            <person name="Hayashi K."/>
            <person name="Honjo A."/>
            <person name="Ikemoto K."/>
            <person name="Inada T."/>
            <person name="Itoh T."/>
            <person name="Kajihara M."/>
            <person name="Kanai K."/>
            <person name="Kashimoto K."/>
            <person name="Kimura S."/>
            <person name="Kitagawa M."/>
            <person name="Makino K."/>
            <person name="Masuda S."/>
            <person name="Miki T."/>
            <person name="Mizobuchi K."/>
            <person name="Mori H."/>
            <person name="Motomura K."/>
            <person name="Nakamura Y."/>
            <person name="Nashimoto H."/>
            <person name="Nishio Y."/>
            <person name="Saito N."/>
            <person name="Sampei G."/>
            <person name="Seki Y."/>
            <person name="Tagami H."/>
            <person name="Takemoto K."/>
            <person name="Wada C."/>
            <person name="Yamamoto Y."/>
            <person name="Yano M."/>
            <person name="Horiuchi T."/>
        </authorList>
    </citation>
    <scope>NUCLEOTIDE SEQUENCE [LARGE SCALE GENOMIC DNA]</scope>
    <source>
        <strain>K12 / W3110 / ATCC 27325 / DSM 5911</strain>
    </source>
</reference>
<reference key="2">
    <citation type="submission" date="1997-01" db="EMBL/GenBank/DDBJ databases">
        <title>Sequence of minutes 4-25 of Escherichia coli.</title>
        <authorList>
            <person name="Chung E."/>
            <person name="Allen E."/>
            <person name="Araujo R."/>
            <person name="Aparicio A.M."/>
            <person name="Davis K."/>
            <person name="Duncan M."/>
            <person name="Federspiel N."/>
            <person name="Hyman R."/>
            <person name="Kalman S."/>
            <person name="Komp C."/>
            <person name="Kurdi O."/>
            <person name="Lew H."/>
            <person name="Lin D."/>
            <person name="Namath A."/>
            <person name="Oefner P."/>
            <person name="Roberts D."/>
            <person name="Schramm S."/>
            <person name="Davis R.W."/>
        </authorList>
    </citation>
    <scope>NUCLEOTIDE SEQUENCE [LARGE SCALE GENOMIC DNA]</scope>
    <source>
        <strain>K12 / MG1655 / ATCC 47076</strain>
    </source>
</reference>
<reference key="3">
    <citation type="journal article" date="1997" name="Science">
        <title>The complete genome sequence of Escherichia coli K-12.</title>
        <authorList>
            <person name="Blattner F.R."/>
            <person name="Plunkett G. III"/>
            <person name="Bloch C.A."/>
            <person name="Perna N.T."/>
            <person name="Burland V."/>
            <person name="Riley M."/>
            <person name="Collado-Vides J."/>
            <person name="Glasner J.D."/>
            <person name="Rode C.K."/>
            <person name="Mayhew G.F."/>
            <person name="Gregor J."/>
            <person name="Davis N.W."/>
            <person name="Kirkpatrick H.A."/>
            <person name="Goeden M.A."/>
            <person name="Rose D.J."/>
            <person name="Mau B."/>
            <person name="Shao Y."/>
        </authorList>
    </citation>
    <scope>NUCLEOTIDE SEQUENCE [LARGE SCALE GENOMIC DNA]</scope>
    <source>
        <strain>K12 / MG1655 / ATCC 47076</strain>
    </source>
</reference>
<reference key="4">
    <citation type="journal article" date="2006" name="Mol. Syst. Biol.">
        <title>Highly accurate genome sequences of Escherichia coli K-12 strains MG1655 and W3110.</title>
        <authorList>
            <person name="Hayashi K."/>
            <person name="Morooka N."/>
            <person name="Yamamoto Y."/>
            <person name="Fujita K."/>
            <person name="Isono K."/>
            <person name="Choi S."/>
            <person name="Ohtsubo E."/>
            <person name="Baba T."/>
            <person name="Wanner B.L."/>
            <person name="Mori H."/>
            <person name="Horiuchi T."/>
        </authorList>
    </citation>
    <scope>NUCLEOTIDE SEQUENCE [LARGE SCALE GENOMIC DNA]</scope>
    <source>
        <strain>K12 / W3110 / ATCC 27325 / DSM 5911</strain>
    </source>
</reference>
<reference key="5">
    <citation type="journal article" date="2003" name="J. Bacteriol.">
        <title>Molecular analysis of the copper-transporting efflux system CusCFBA of Escherichia coli.</title>
        <authorList>
            <person name="Franke S."/>
            <person name="Grass G."/>
            <person name="Rensing C."/>
            <person name="Nies D.H."/>
        </authorList>
    </citation>
    <scope>PROTEIN SEQUENCE OF 22-26</scope>
    <scope>CHARACTERIZATION</scope>
    <scope>MUTAGENESIS OF 25-HIS--HIS-27; ASP-48; 57-HIS-HIS-58; MET-69; MET-71 AND PHE-73</scope>
    <source>
        <strain>K12 / W3110 / ATCC 27325 / DSM 5911</strain>
    </source>
</reference>
<reference key="6">
    <citation type="journal article" date="2001" name="J. Biol. Chem.">
        <title>The independent cue and cus systems confer copper tolerance during aerobic and anaerobic growth in Escherichia coli.</title>
        <authorList>
            <person name="Outten F.W."/>
            <person name="Huffman D.L."/>
            <person name="Hale J.A."/>
            <person name="O'Halloran T.V."/>
        </authorList>
    </citation>
    <scope>FUNCTION IN COPPER HOMEOSTASIS</scope>
    <source>
        <strain>K12</strain>
    </source>
</reference>
<reference key="7">
    <citation type="journal article" date="2001" name="Microbiology">
        <title>The product of the ybdE gene of the Escherichia coli chromosome is involved in detoxification of silver ions.</title>
        <authorList>
            <person name="Franke S."/>
            <person name="Grass G."/>
            <person name="Nies D.H."/>
        </authorList>
    </citation>
    <scope>INDUCTION</scope>
    <source>
        <strain>K38</strain>
    </source>
</reference>
<reference key="8">
    <citation type="journal article" date="2014" name="J. Biol. Chem.">
        <title>Mechanism of ATPase-mediated Cu+ export and delivery to periplasmic chaperones: the interaction of Escherichia coli CopA and CusF.</title>
        <authorList>
            <person name="Padilla-Benavides T."/>
            <person name="George Thompson A.M."/>
            <person name="McEvoy M.M."/>
            <person name="Argueello J.M."/>
        </authorList>
    </citation>
    <scope>FUNCTION</scope>
    <scope>COPPER-BINDING</scope>
    <scope>SUBUNIT</scope>
    <scope>MUTAGENESIS OF 69-MET--MET-71</scope>
</reference>
<organism>
    <name type="scientific">Escherichia coli (strain K12)</name>
    <dbReference type="NCBI Taxonomy" id="83333"/>
    <lineage>
        <taxon>Bacteria</taxon>
        <taxon>Pseudomonadati</taxon>
        <taxon>Pseudomonadota</taxon>
        <taxon>Gammaproteobacteria</taxon>
        <taxon>Enterobacterales</taxon>
        <taxon>Enterobacteriaceae</taxon>
        <taxon>Escherichia</taxon>
    </lineage>
</organism>
<comment type="function">
    <text evidence="2 4">Part of a cation efflux system that mediates resistance to copper and silver. Binds one copper per polypeptide (PubMed:11399769, PubMed:24917681).</text>
</comment>
<comment type="subunit">
    <text evidence="5">The cus efflux system is composed of CusA, CusB, CusC and CusF. Interacts with copper-exporting P-type ATPase CopA; when this protein is precharged with copper it binds very little CopA (PubMed:24917681).</text>
</comment>
<comment type="subcellular location">
    <subcellularLocation>
        <location>Periplasm</location>
    </subcellularLocation>
</comment>
<comment type="induction">
    <text evidence="1">Transcriptionally regulated by CusR in response to copper and silver ions.</text>
</comment>
<comment type="miscellaneous">
    <text>The cus system plays an important role in copper tolerance under anaerobic growth and, under extreme copper stress, in aerobic growth.</text>
</comment>
<accession>P77214</accession>